<name>GLGA_PSEAE</name>
<sequence>MGHSVAGVCLEEPAVLTAFPSLLHPQDPPQQRDRILFVTAELSDFVKVGGLGDFSAALPRVLKREHSVRVLLPGYRQVLERCRDLRIIGSLPGRAAIPPCEIGLVTLDDGLEVMLVLCPLLYEREGTPYMDDQGNDWPDNHLRFARLCLAAAEIAGGRGAQGWQPGLVHANDWPSALTPAYMAWNGVRTPSLFTIHNLAYQGLCDLQCSAELGLPDEALSHESMEFHGRLSFLKAGIAHAHHITTVSETYAQEITTPEYGCGLHGILKYKVEKRQLSGIVNGIDDSWQPHCDPHLVACFSARQWAGKRANTRYVEERFGLEPGKGPLFAVVSRLVQQKGIDLTLEISDALLQAGGRLVSIGRGEPNLEKAMLELARRHPGQVGVHIGFDETEARRIYAGSDFLLMPSRYEPCGLSQLYAQCFGSLPIARCTGGLADTIVDGVTGFLFREETAQSYLDAVMRAINVYHCPSLLNAMRCKAMAAPMFWSDSVEPYNRLYRRLLRNTAPALRGVRQ</sequence>
<accession>Q9I1V0</accession>
<keyword id="KW-0320">Glycogen biosynthesis</keyword>
<keyword id="KW-0328">Glycosyltransferase</keyword>
<keyword id="KW-1185">Reference proteome</keyword>
<keyword id="KW-0808">Transferase</keyword>
<feature type="chain" id="PRO_0000188632" description="Glycogen synthase">
    <location>
        <begin position="1"/>
        <end position="513"/>
    </location>
</feature>
<feature type="binding site" evidence="1">
    <location>
        <position position="47"/>
    </location>
    <ligand>
        <name>ADP-alpha-D-glucose</name>
        <dbReference type="ChEBI" id="CHEBI:57498"/>
    </ligand>
</feature>
<proteinExistence type="inferred from homology"/>
<dbReference type="EC" id="2.4.1.21" evidence="1"/>
<dbReference type="EMBL" id="AE004091">
    <property type="protein sequence ID" value="AAG05553.1"/>
    <property type="molecule type" value="Genomic_DNA"/>
</dbReference>
<dbReference type="PIR" id="H83375">
    <property type="entry name" value="H83375"/>
</dbReference>
<dbReference type="RefSeq" id="NP_250855.1">
    <property type="nucleotide sequence ID" value="NC_002516.2"/>
</dbReference>
<dbReference type="RefSeq" id="WP_003115521.1">
    <property type="nucleotide sequence ID" value="NZ_QZGE01000014.1"/>
</dbReference>
<dbReference type="SMR" id="Q9I1V0"/>
<dbReference type="FunCoup" id="Q9I1V0">
    <property type="interactions" value="310"/>
</dbReference>
<dbReference type="STRING" id="208964.PA2165"/>
<dbReference type="CAZy" id="GT5">
    <property type="family name" value="Glycosyltransferase Family 5"/>
</dbReference>
<dbReference type="PaxDb" id="208964-PA2165"/>
<dbReference type="GeneID" id="881026"/>
<dbReference type="KEGG" id="pae:PA2165"/>
<dbReference type="PATRIC" id="fig|208964.12.peg.2265"/>
<dbReference type="PseudoCAP" id="PA2165"/>
<dbReference type="HOGENOM" id="CLU_009583_18_4_6"/>
<dbReference type="InParanoid" id="Q9I1V0"/>
<dbReference type="OrthoDB" id="9808590at2"/>
<dbReference type="PhylomeDB" id="Q9I1V0"/>
<dbReference type="BioCyc" id="PAER208964:G1FZ6-2205-MONOMER"/>
<dbReference type="UniPathway" id="UPA00164"/>
<dbReference type="Proteomes" id="UP000002438">
    <property type="component" value="Chromosome"/>
</dbReference>
<dbReference type="GO" id="GO:0009011">
    <property type="term" value="F:alpha-1,4-glucan glucosyltransferase (ADP-glucose donor) activity"/>
    <property type="evidence" value="ECO:0007669"/>
    <property type="project" value="UniProtKB-UniRule"/>
</dbReference>
<dbReference type="GO" id="GO:0004373">
    <property type="term" value="F:alpha-1,4-glucan glucosyltransferase (UDP-glucose donor) activity"/>
    <property type="evidence" value="ECO:0007669"/>
    <property type="project" value="InterPro"/>
</dbReference>
<dbReference type="GO" id="GO:0005978">
    <property type="term" value="P:glycogen biosynthetic process"/>
    <property type="evidence" value="ECO:0007669"/>
    <property type="project" value="UniProtKB-UniRule"/>
</dbReference>
<dbReference type="CDD" id="cd03791">
    <property type="entry name" value="GT5_Glycogen_synthase_DULL1-like"/>
    <property type="match status" value="1"/>
</dbReference>
<dbReference type="Gene3D" id="3.40.50.2000">
    <property type="entry name" value="Glycogen Phosphorylase B"/>
    <property type="match status" value="2"/>
</dbReference>
<dbReference type="HAMAP" id="MF_00484">
    <property type="entry name" value="Glycogen_synth"/>
    <property type="match status" value="1"/>
</dbReference>
<dbReference type="InterPro" id="IPR001296">
    <property type="entry name" value="Glyco_trans_1"/>
</dbReference>
<dbReference type="InterPro" id="IPR011835">
    <property type="entry name" value="GS/SS"/>
</dbReference>
<dbReference type="InterPro" id="IPR013534">
    <property type="entry name" value="Starch_synth_cat_dom"/>
</dbReference>
<dbReference type="NCBIfam" id="TIGR02095">
    <property type="entry name" value="glgA"/>
    <property type="match status" value="1"/>
</dbReference>
<dbReference type="NCBIfam" id="NF001899">
    <property type="entry name" value="PRK00654.1-2"/>
    <property type="match status" value="1"/>
</dbReference>
<dbReference type="NCBIfam" id="NF001901">
    <property type="entry name" value="PRK00654.1-5"/>
    <property type="match status" value="1"/>
</dbReference>
<dbReference type="PANTHER" id="PTHR45825:SF8">
    <property type="entry name" value="GLYCOGEN SYNTHASE"/>
    <property type="match status" value="1"/>
</dbReference>
<dbReference type="PANTHER" id="PTHR45825">
    <property type="entry name" value="GRANULE-BOUND STARCH SYNTHASE 1, CHLOROPLASTIC/AMYLOPLASTIC"/>
    <property type="match status" value="1"/>
</dbReference>
<dbReference type="Pfam" id="PF08323">
    <property type="entry name" value="Glyco_transf_5"/>
    <property type="match status" value="1"/>
</dbReference>
<dbReference type="Pfam" id="PF00534">
    <property type="entry name" value="Glycos_transf_1"/>
    <property type="match status" value="1"/>
</dbReference>
<dbReference type="SUPFAM" id="SSF53756">
    <property type="entry name" value="UDP-Glycosyltransferase/glycogen phosphorylase"/>
    <property type="match status" value="1"/>
</dbReference>
<comment type="function">
    <text evidence="1">Synthesizes alpha-1,4-glucan chains using ADP-glucose.</text>
</comment>
<comment type="catalytic activity">
    <reaction evidence="1">
        <text>[(1-&gt;4)-alpha-D-glucosyl](n) + ADP-alpha-D-glucose = [(1-&gt;4)-alpha-D-glucosyl](n+1) + ADP + H(+)</text>
        <dbReference type="Rhea" id="RHEA:18189"/>
        <dbReference type="Rhea" id="RHEA-COMP:9584"/>
        <dbReference type="Rhea" id="RHEA-COMP:9587"/>
        <dbReference type="ChEBI" id="CHEBI:15378"/>
        <dbReference type="ChEBI" id="CHEBI:15444"/>
        <dbReference type="ChEBI" id="CHEBI:57498"/>
        <dbReference type="ChEBI" id="CHEBI:456216"/>
        <dbReference type="EC" id="2.4.1.21"/>
    </reaction>
</comment>
<comment type="pathway">
    <text evidence="1">Glycan biosynthesis; glycogen biosynthesis.</text>
</comment>
<comment type="similarity">
    <text evidence="1">Belongs to the glycosyltransferase 1 family. Bacterial/plant glycogen synthase subfamily.</text>
</comment>
<organism>
    <name type="scientific">Pseudomonas aeruginosa (strain ATCC 15692 / DSM 22644 / CIP 104116 / JCM 14847 / LMG 12228 / 1C / PRS 101 / PAO1)</name>
    <dbReference type="NCBI Taxonomy" id="208964"/>
    <lineage>
        <taxon>Bacteria</taxon>
        <taxon>Pseudomonadati</taxon>
        <taxon>Pseudomonadota</taxon>
        <taxon>Gammaproteobacteria</taxon>
        <taxon>Pseudomonadales</taxon>
        <taxon>Pseudomonadaceae</taxon>
        <taxon>Pseudomonas</taxon>
    </lineage>
</organism>
<gene>
    <name evidence="1" type="primary">glgA</name>
    <name type="ordered locus">PA2165</name>
</gene>
<reference key="1">
    <citation type="journal article" date="2000" name="Nature">
        <title>Complete genome sequence of Pseudomonas aeruginosa PAO1, an opportunistic pathogen.</title>
        <authorList>
            <person name="Stover C.K."/>
            <person name="Pham X.-Q.T."/>
            <person name="Erwin A.L."/>
            <person name="Mizoguchi S.D."/>
            <person name="Warrener P."/>
            <person name="Hickey M.J."/>
            <person name="Brinkman F.S.L."/>
            <person name="Hufnagle W.O."/>
            <person name="Kowalik D.J."/>
            <person name="Lagrou M."/>
            <person name="Garber R.L."/>
            <person name="Goltry L."/>
            <person name="Tolentino E."/>
            <person name="Westbrock-Wadman S."/>
            <person name="Yuan Y."/>
            <person name="Brody L.L."/>
            <person name="Coulter S.N."/>
            <person name="Folger K.R."/>
            <person name="Kas A."/>
            <person name="Larbig K."/>
            <person name="Lim R.M."/>
            <person name="Smith K.A."/>
            <person name="Spencer D.H."/>
            <person name="Wong G.K.-S."/>
            <person name="Wu Z."/>
            <person name="Paulsen I.T."/>
            <person name="Reizer J."/>
            <person name="Saier M.H. Jr."/>
            <person name="Hancock R.E.W."/>
            <person name="Lory S."/>
            <person name="Olson M.V."/>
        </authorList>
    </citation>
    <scope>NUCLEOTIDE SEQUENCE [LARGE SCALE GENOMIC DNA]</scope>
    <source>
        <strain>ATCC 15692 / DSM 22644 / CIP 104116 / JCM 14847 / LMG 12228 / 1C / PRS 101 / PAO1</strain>
    </source>
</reference>
<evidence type="ECO:0000255" key="1">
    <source>
        <dbReference type="HAMAP-Rule" id="MF_00484"/>
    </source>
</evidence>
<protein>
    <recommendedName>
        <fullName evidence="1">Glycogen synthase</fullName>
        <ecNumber evidence="1">2.4.1.21</ecNumber>
    </recommendedName>
    <alternativeName>
        <fullName evidence="1">Starch [bacterial glycogen] synthase</fullName>
    </alternativeName>
</protein>